<protein>
    <recommendedName>
        <fullName evidence="1">Probable multidrug ABC transporter ATP-binding protein YbhF</fullName>
    </recommendedName>
</protein>
<reference key="1">
    <citation type="journal article" date="2002" name="Nucleic Acids Res.">
        <title>Genome sequence of Shigella flexneri 2a: insights into pathogenicity through comparison with genomes of Escherichia coli K12 and O157.</title>
        <authorList>
            <person name="Jin Q."/>
            <person name="Yuan Z."/>
            <person name="Xu J."/>
            <person name="Wang Y."/>
            <person name="Shen Y."/>
            <person name="Lu W."/>
            <person name="Wang J."/>
            <person name="Liu H."/>
            <person name="Yang J."/>
            <person name="Yang F."/>
            <person name="Zhang X."/>
            <person name="Zhang J."/>
            <person name="Yang G."/>
            <person name="Wu H."/>
            <person name="Qu D."/>
            <person name="Dong J."/>
            <person name="Sun L."/>
            <person name="Xue Y."/>
            <person name="Zhao A."/>
            <person name="Gao Y."/>
            <person name="Zhu J."/>
            <person name="Kan B."/>
            <person name="Ding K."/>
            <person name="Chen S."/>
            <person name="Cheng H."/>
            <person name="Yao Z."/>
            <person name="He B."/>
            <person name="Chen R."/>
            <person name="Ma D."/>
            <person name="Qiang B."/>
            <person name="Wen Y."/>
            <person name="Hou Y."/>
            <person name="Yu J."/>
        </authorList>
    </citation>
    <scope>NUCLEOTIDE SEQUENCE [LARGE SCALE GENOMIC DNA]</scope>
    <source>
        <strain>301 / Serotype 2a</strain>
    </source>
</reference>
<reference key="2">
    <citation type="journal article" date="2003" name="Infect. Immun.">
        <title>Complete genome sequence and comparative genomics of Shigella flexneri serotype 2a strain 2457T.</title>
        <authorList>
            <person name="Wei J."/>
            <person name="Goldberg M.B."/>
            <person name="Burland V."/>
            <person name="Venkatesan M.M."/>
            <person name="Deng W."/>
            <person name="Fournier G."/>
            <person name="Mayhew G.F."/>
            <person name="Plunkett G. III"/>
            <person name="Rose D.J."/>
            <person name="Darling A."/>
            <person name="Mau B."/>
            <person name="Perna N.T."/>
            <person name="Payne S.M."/>
            <person name="Runyen-Janecky L.J."/>
            <person name="Zhou S."/>
            <person name="Schwartz D.C."/>
            <person name="Blattner F.R."/>
        </authorList>
    </citation>
    <scope>NUCLEOTIDE SEQUENCE [LARGE SCALE GENOMIC DNA]</scope>
    <source>
        <strain>ATCC 700930 / 2457T / Serotype 2a</strain>
    </source>
</reference>
<accession>P0A9U2</accession>
<accession>P75776</accession>
<accession>Q9R7S3</accession>
<accession>Q9R7S4</accession>
<gene>
    <name type="primary">ybhF</name>
    <name type="ordered locus">SF0744</name>
    <name type="ordered locus">S0785</name>
</gene>
<organism>
    <name type="scientific">Shigella flexneri</name>
    <dbReference type="NCBI Taxonomy" id="623"/>
    <lineage>
        <taxon>Bacteria</taxon>
        <taxon>Pseudomonadati</taxon>
        <taxon>Pseudomonadota</taxon>
        <taxon>Gammaproteobacteria</taxon>
        <taxon>Enterobacterales</taxon>
        <taxon>Enterobacteriaceae</taxon>
        <taxon>Shigella</taxon>
    </lineage>
</organism>
<comment type="function">
    <text evidence="1">Part of the ABC transporter complex YbhFSR that could be involved in efflux of cefoperazone. Probably responsible for energy coupling to the transport system.</text>
</comment>
<comment type="subunit">
    <text evidence="1">The complex is probably composed of two ATP-binding proteins (YbhF) and two transmembrane proteins (YbhR and YbhS).</text>
</comment>
<comment type="similarity">
    <text evidence="3">Belongs to the ABC transporter superfamily.</text>
</comment>
<comment type="sequence caution" evidence="3">
    <conflict type="erroneous initiation">
        <sequence resource="EMBL-CDS" id="AAN42379"/>
    </conflict>
</comment>
<comment type="sequence caution" evidence="3">
    <conflict type="erroneous initiation">
        <sequence resource="EMBL-CDS" id="AAP16256"/>
    </conflict>
</comment>
<feature type="chain" id="PRO_0000093157" description="Probable multidrug ABC transporter ATP-binding protein YbhF">
    <location>
        <begin position="1"/>
        <end position="578"/>
    </location>
</feature>
<feature type="domain" description="ABC transporter 1" evidence="2">
    <location>
        <begin position="6"/>
        <end position="237"/>
    </location>
</feature>
<feature type="domain" description="ABC transporter 2" evidence="2">
    <location>
        <begin position="330"/>
        <end position="559"/>
    </location>
</feature>
<feature type="binding site" evidence="2">
    <location>
        <begin position="40"/>
        <end position="47"/>
    </location>
    <ligand>
        <name>ATP</name>
        <dbReference type="ChEBI" id="CHEBI:30616"/>
        <label>1</label>
    </ligand>
</feature>
<feature type="binding site" evidence="2">
    <location>
        <begin position="362"/>
        <end position="369"/>
    </location>
    <ligand>
        <name>ATP</name>
        <dbReference type="ChEBI" id="CHEBI:30616"/>
        <label>2</label>
    </ligand>
</feature>
<feature type="sequence conflict" description="In Ref. 2; AAP16256." evidence="3" ref="2">
    <original>A</original>
    <variation>E</variation>
    <location>
        <position position="44"/>
    </location>
</feature>
<name>YBHF_SHIFL</name>
<sequence>MNDAVITLNGLEKRFPGMDKPAVAPLDCTIHAGYVTGLVGPDGAGKTTLMRMLAGLLKPDSGSATVIGFDPIKNDGALHAVLGYMPQKFGLYEDLTVMENLNLYADLRSVTGEARKQTFARLLEFTSLGPFTGRLAGKLSGGMKQKLGLACTLVGEPKVLLLDEPGVGVDPISRRELWQMVHELAGEGMLILWSTSYLDEAEQCRDVLLMNEGELLYQGEPKALTQTMAGRSFLMTSPHEGNRKLLQRALKLPQVSDGMIQGKSVRLILKKEATPDDIRHADGMPEININETTPRFEDAFIDLLGGAGTSESPLGAILHTVEGTPGETVIEAKELTKKFGDFAATDHVNFAVKRGEIFGLLGPNGAGKSTTFKMMCGLLVPTSGQALVLGMDLKESSGKARQHLGYMAQKFSLYGNLTVEQNLRFFSGVYGLRGRAQNEKISRMSEAFGLKSIASHATDELPLGFKQRLALACSLMHEPDILFLDEPTSGVDPLTRREFWLHINSMVEKGVTVMVTTHFMDEAEYCDRIGLVYRGKLIASGTPDDLKAQSANDEQPDPTMEQAFIQLIHDWDKEHSNE</sequence>
<keyword id="KW-0067">ATP-binding</keyword>
<keyword id="KW-0547">Nucleotide-binding</keyword>
<keyword id="KW-1185">Reference proteome</keyword>
<keyword id="KW-0677">Repeat</keyword>
<keyword id="KW-0813">Transport</keyword>
<proteinExistence type="inferred from homology"/>
<evidence type="ECO:0000250" key="1">
    <source>
        <dbReference type="UniProtKB" id="P0A9U1"/>
    </source>
</evidence>
<evidence type="ECO:0000255" key="2">
    <source>
        <dbReference type="PROSITE-ProRule" id="PRU00434"/>
    </source>
</evidence>
<evidence type="ECO:0000305" key="3"/>
<dbReference type="EMBL" id="AE005674">
    <property type="protein sequence ID" value="AAN42379.1"/>
    <property type="status" value="ALT_INIT"/>
    <property type="molecule type" value="Genomic_DNA"/>
</dbReference>
<dbReference type="EMBL" id="AE014073">
    <property type="protein sequence ID" value="AAP16256.1"/>
    <property type="status" value="ALT_INIT"/>
    <property type="molecule type" value="Genomic_DNA"/>
</dbReference>
<dbReference type="RefSeq" id="NP_706672.1">
    <property type="nucleotide sequence ID" value="NC_004337.2"/>
</dbReference>
<dbReference type="RefSeq" id="WP_000996107.1">
    <property type="nucleotide sequence ID" value="NZ_WPGW01000030.1"/>
</dbReference>
<dbReference type="SMR" id="P0A9U2"/>
<dbReference type="STRING" id="198214.SF0744"/>
<dbReference type="PaxDb" id="198214-SF0744"/>
<dbReference type="GeneID" id="1023711"/>
<dbReference type="KEGG" id="sfl:SF0744"/>
<dbReference type="KEGG" id="sfx:S0785"/>
<dbReference type="PATRIC" id="fig|198214.7.peg.865"/>
<dbReference type="HOGENOM" id="CLU_000604_83_0_6"/>
<dbReference type="Proteomes" id="UP000001006">
    <property type="component" value="Chromosome"/>
</dbReference>
<dbReference type="Proteomes" id="UP000002673">
    <property type="component" value="Chromosome"/>
</dbReference>
<dbReference type="GO" id="GO:0005524">
    <property type="term" value="F:ATP binding"/>
    <property type="evidence" value="ECO:0007669"/>
    <property type="project" value="UniProtKB-KW"/>
</dbReference>
<dbReference type="GO" id="GO:0016887">
    <property type="term" value="F:ATP hydrolysis activity"/>
    <property type="evidence" value="ECO:0007669"/>
    <property type="project" value="InterPro"/>
</dbReference>
<dbReference type="CDD" id="cd03230">
    <property type="entry name" value="ABC_DR_subfamily_A"/>
    <property type="match status" value="2"/>
</dbReference>
<dbReference type="FunFam" id="3.40.50.300:FF:000686">
    <property type="entry name" value="Multidrug ABC transporter ATP-binding protein"/>
    <property type="match status" value="1"/>
</dbReference>
<dbReference type="FunFam" id="3.40.50.300:FF:000883">
    <property type="entry name" value="Multidrug ABC transporter ATP-binding protein"/>
    <property type="match status" value="1"/>
</dbReference>
<dbReference type="Gene3D" id="3.40.50.300">
    <property type="entry name" value="P-loop containing nucleotide triphosphate hydrolases"/>
    <property type="match status" value="2"/>
</dbReference>
<dbReference type="InterPro" id="IPR003593">
    <property type="entry name" value="AAA+_ATPase"/>
</dbReference>
<dbReference type="InterPro" id="IPR003439">
    <property type="entry name" value="ABC_transporter-like_ATP-bd"/>
</dbReference>
<dbReference type="InterPro" id="IPR017871">
    <property type="entry name" value="ABC_transporter-like_CS"/>
</dbReference>
<dbReference type="InterPro" id="IPR027417">
    <property type="entry name" value="P-loop_NTPase"/>
</dbReference>
<dbReference type="PANTHER" id="PTHR43038:SF3">
    <property type="entry name" value="ABC TRANSPORTER G FAMILY MEMBER 20 ISOFORM X1"/>
    <property type="match status" value="1"/>
</dbReference>
<dbReference type="PANTHER" id="PTHR43038">
    <property type="entry name" value="ATP-BINDING CASSETTE, SUB-FAMILY H, MEMBER 1"/>
    <property type="match status" value="1"/>
</dbReference>
<dbReference type="Pfam" id="PF00005">
    <property type="entry name" value="ABC_tran"/>
    <property type="match status" value="2"/>
</dbReference>
<dbReference type="SMART" id="SM00382">
    <property type="entry name" value="AAA"/>
    <property type="match status" value="2"/>
</dbReference>
<dbReference type="SUPFAM" id="SSF52540">
    <property type="entry name" value="P-loop containing nucleoside triphosphate hydrolases"/>
    <property type="match status" value="2"/>
</dbReference>
<dbReference type="PROSITE" id="PS00211">
    <property type="entry name" value="ABC_TRANSPORTER_1"/>
    <property type="match status" value="1"/>
</dbReference>
<dbReference type="PROSITE" id="PS50893">
    <property type="entry name" value="ABC_TRANSPORTER_2"/>
    <property type="match status" value="2"/>
</dbReference>